<keyword id="KW-0963">Cytoplasm</keyword>
<keyword id="KW-0444">Lipid biosynthesis</keyword>
<keyword id="KW-0443">Lipid metabolism</keyword>
<keyword id="KW-0594">Phospholipid biosynthesis</keyword>
<keyword id="KW-1208">Phospholipid metabolism</keyword>
<keyword id="KW-1185">Reference proteome</keyword>
<keyword id="KW-0808">Transferase</keyword>
<sequence length="346" mass="37764">MSKLTIAIDAMGGDVGPHIPILAALKSLQLHPNLHIIIVGNRTQLLPVLKKYQLSEHARLSLIHTDNEISMEVNPVYALRHRSDSSMHIALKLVSQGKVDACVSAGNTGALMLLAKQALKTLPGISRPALISSLPNMHLGHTYMLDLGANLQCDSHTLFNFAVMGSVLCEKVDQINSPRVSILNVGKEKNKGGDVLQHCAELLKQTKHINYAGFVEANELFTCRSNIIVTDGFSGNIALKSCEGMGRVFSEQLDKAINSSLYSKLLGKLLRPILKKQLKHLHPDMYNGASLIGLRGIVVKSHGSANEIAFTCAIEHAIQETQWQIPASISKKLETVLSERDDLSHE</sequence>
<gene>
    <name evidence="1" type="primary">plsX</name>
    <name type="ordered locus">Ping_1086</name>
</gene>
<evidence type="ECO:0000255" key="1">
    <source>
        <dbReference type="HAMAP-Rule" id="MF_00019"/>
    </source>
</evidence>
<protein>
    <recommendedName>
        <fullName evidence="1">Phosphate acyltransferase</fullName>
        <ecNumber evidence="1">2.3.1.274</ecNumber>
    </recommendedName>
    <alternativeName>
        <fullName evidence="1">Acyl-ACP phosphotransacylase</fullName>
    </alternativeName>
    <alternativeName>
        <fullName evidence="1">Acyl-[acyl-carrier-protein]--phosphate acyltransferase</fullName>
    </alternativeName>
    <alternativeName>
        <fullName evidence="1">Phosphate-acyl-ACP acyltransferase</fullName>
    </alternativeName>
</protein>
<accession>A1STW0</accession>
<feature type="chain" id="PRO_1000001806" description="Phosphate acyltransferase">
    <location>
        <begin position="1"/>
        <end position="346"/>
    </location>
</feature>
<reference key="1">
    <citation type="journal article" date="2008" name="BMC Genomics">
        <title>Genomics of an extreme psychrophile, Psychromonas ingrahamii.</title>
        <authorList>
            <person name="Riley M."/>
            <person name="Staley J.T."/>
            <person name="Danchin A."/>
            <person name="Wang T.Z."/>
            <person name="Brettin T.S."/>
            <person name="Hauser L.J."/>
            <person name="Land M.L."/>
            <person name="Thompson L.S."/>
        </authorList>
    </citation>
    <scope>NUCLEOTIDE SEQUENCE [LARGE SCALE GENOMIC DNA]</scope>
    <source>
        <strain>DSM 17664 / CCUG 51855 / 37</strain>
    </source>
</reference>
<comment type="function">
    <text evidence="1">Catalyzes the reversible formation of acyl-phosphate (acyl-PO(4)) from acyl-[acyl-carrier-protein] (acyl-ACP). This enzyme utilizes acyl-ACP as fatty acyl donor, but not acyl-CoA.</text>
</comment>
<comment type="catalytic activity">
    <reaction evidence="1">
        <text>a fatty acyl-[ACP] + phosphate = an acyl phosphate + holo-[ACP]</text>
        <dbReference type="Rhea" id="RHEA:42292"/>
        <dbReference type="Rhea" id="RHEA-COMP:9685"/>
        <dbReference type="Rhea" id="RHEA-COMP:14125"/>
        <dbReference type="ChEBI" id="CHEBI:43474"/>
        <dbReference type="ChEBI" id="CHEBI:59918"/>
        <dbReference type="ChEBI" id="CHEBI:64479"/>
        <dbReference type="ChEBI" id="CHEBI:138651"/>
        <dbReference type="EC" id="2.3.1.274"/>
    </reaction>
</comment>
<comment type="pathway">
    <text evidence="1">Lipid metabolism; phospholipid metabolism.</text>
</comment>
<comment type="subunit">
    <text evidence="1">Homodimer. Probably interacts with PlsY.</text>
</comment>
<comment type="subcellular location">
    <subcellularLocation>
        <location evidence="1">Cytoplasm</location>
    </subcellularLocation>
    <text evidence="1">Associated with the membrane possibly through PlsY.</text>
</comment>
<comment type="similarity">
    <text evidence="1">Belongs to the PlsX family.</text>
</comment>
<proteinExistence type="inferred from homology"/>
<organism>
    <name type="scientific">Psychromonas ingrahamii (strain DSM 17664 / CCUG 51855 / 37)</name>
    <dbReference type="NCBI Taxonomy" id="357804"/>
    <lineage>
        <taxon>Bacteria</taxon>
        <taxon>Pseudomonadati</taxon>
        <taxon>Pseudomonadota</taxon>
        <taxon>Gammaproteobacteria</taxon>
        <taxon>Alteromonadales</taxon>
        <taxon>Psychromonadaceae</taxon>
        <taxon>Psychromonas</taxon>
    </lineage>
</organism>
<name>PLSX_PSYIN</name>
<dbReference type="EC" id="2.3.1.274" evidence="1"/>
<dbReference type="EMBL" id="CP000510">
    <property type="protein sequence ID" value="ABM02925.1"/>
    <property type="molecule type" value="Genomic_DNA"/>
</dbReference>
<dbReference type="RefSeq" id="WP_011769488.1">
    <property type="nucleotide sequence ID" value="NC_008709.1"/>
</dbReference>
<dbReference type="SMR" id="A1STW0"/>
<dbReference type="STRING" id="357804.Ping_1086"/>
<dbReference type="KEGG" id="pin:Ping_1086"/>
<dbReference type="eggNOG" id="COG0416">
    <property type="taxonomic scope" value="Bacteria"/>
</dbReference>
<dbReference type="HOGENOM" id="CLU_039379_1_0_6"/>
<dbReference type="OrthoDB" id="9806408at2"/>
<dbReference type="UniPathway" id="UPA00085"/>
<dbReference type="Proteomes" id="UP000000639">
    <property type="component" value="Chromosome"/>
</dbReference>
<dbReference type="GO" id="GO:0005737">
    <property type="term" value="C:cytoplasm"/>
    <property type="evidence" value="ECO:0007669"/>
    <property type="project" value="UniProtKB-SubCell"/>
</dbReference>
<dbReference type="GO" id="GO:0043811">
    <property type="term" value="F:phosphate:acyl-[acyl carrier protein] acyltransferase activity"/>
    <property type="evidence" value="ECO:0007669"/>
    <property type="project" value="UniProtKB-UniRule"/>
</dbReference>
<dbReference type="GO" id="GO:0006633">
    <property type="term" value="P:fatty acid biosynthetic process"/>
    <property type="evidence" value="ECO:0007669"/>
    <property type="project" value="UniProtKB-UniRule"/>
</dbReference>
<dbReference type="GO" id="GO:0008654">
    <property type="term" value="P:phospholipid biosynthetic process"/>
    <property type="evidence" value="ECO:0007669"/>
    <property type="project" value="UniProtKB-KW"/>
</dbReference>
<dbReference type="Gene3D" id="3.40.718.10">
    <property type="entry name" value="Isopropylmalate Dehydrogenase"/>
    <property type="match status" value="1"/>
</dbReference>
<dbReference type="HAMAP" id="MF_00019">
    <property type="entry name" value="PlsX"/>
    <property type="match status" value="1"/>
</dbReference>
<dbReference type="InterPro" id="IPR003664">
    <property type="entry name" value="FA_synthesis"/>
</dbReference>
<dbReference type="InterPro" id="IPR012281">
    <property type="entry name" value="Phospholipid_synth_PlsX-like"/>
</dbReference>
<dbReference type="NCBIfam" id="TIGR00182">
    <property type="entry name" value="plsX"/>
    <property type="match status" value="1"/>
</dbReference>
<dbReference type="PANTHER" id="PTHR30100">
    <property type="entry name" value="FATTY ACID/PHOSPHOLIPID SYNTHESIS PROTEIN PLSX"/>
    <property type="match status" value="1"/>
</dbReference>
<dbReference type="PANTHER" id="PTHR30100:SF1">
    <property type="entry name" value="PHOSPHATE ACYLTRANSFERASE"/>
    <property type="match status" value="1"/>
</dbReference>
<dbReference type="Pfam" id="PF02504">
    <property type="entry name" value="FA_synthesis"/>
    <property type="match status" value="1"/>
</dbReference>
<dbReference type="PIRSF" id="PIRSF002465">
    <property type="entry name" value="Phsphlp_syn_PlsX"/>
    <property type="match status" value="1"/>
</dbReference>
<dbReference type="SUPFAM" id="SSF53659">
    <property type="entry name" value="Isocitrate/Isopropylmalate dehydrogenase-like"/>
    <property type="match status" value="1"/>
</dbReference>